<protein>
    <recommendedName>
        <fullName evidence="1">FAD synthase</fullName>
        <ecNumber evidence="1">2.7.7.2</ecNumber>
    </recommendedName>
    <alternativeName>
        <fullName evidence="1">FMN adenylyltransferase</fullName>
    </alternativeName>
    <alternativeName>
        <fullName evidence="1">Flavin adenine dinucleotide synthase</fullName>
    </alternativeName>
</protein>
<dbReference type="EC" id="2.7.7.2" evidence="1"/>
<dbReference type="EMBL" id="CP001899">
    <property type="protein sequence ID" value="ADC65822.1"/>
    <property type="molecule type" value="Genomic_DNA"/>
</dbReference>
<dbReference type="RefSeq" id="WP_012966162.1">
    <property type="nucleotide sequence ID" value="NC_013849.1"/>
</dbReference>
<dbReference type="SMR" id="D3RZA9"/>
<dbReference type="STRING" id="589924.Ferp_1676"/>
<dbReference type="PaxDb" id="589924-Ferp_1676"/>
<dbReference type="GeneID" id="8779201"/>
<dbReference type="KEGG" id="fpl:Ferp_1676"/>
<dbReference type="eggNOG" id="arCOG01222">
    <property type="taxonomic scope" value="Archaea"/>
</dbReference>
<dbReference type="HOGENOM" id="CLU_034585_2_1_2"/>
<dbReference type="UniPathway" id="UPA00277">
    <property type="reaction ID" value="UER00407"/>
</dbReference>
<dbReference type="Proteomes" id="UP000002613">
    <property type="component" value="Chromosome"/>
</dbReference>
<dbReference type="GO" id="GO:0005524">
    <property type="term" value="F:ATP binding"/>
    <property type="evidence" value="ECO:0007669"/>
    <property type="project" value="UniProtKB-UniRule"/>
</dbReference>
<dbReference type="GO" id="GO:0003919">
    <property type="term" value="F:FMN adenylyltransferase activity"/>
    <property type="evidence" value="ECO:0007669"/>
    <property type="project" value="UniProtKB-UniRule"/>
</dbReference>
<dbReference type="GO" id="GO:0006747">
    <property type="term" value="P:FAD biosynthetic process"/>
    <property type="evidence" value="ECO:0007669"/>
    <property type="project" value="UniProtKB-UniRule"/>
</dbReference>
<dbReference type="GO" id="GO:0046444">
    <property type="term" value="P:FMN metabolic process"/>
    <property type="evidence" value="ECO:0007669"/>
    <property type="project" value="UniProtKB-UniRule"/>
</dbReference>
<dbReference type="CDD" id="cd02170">
    <property type="entry name" value="cytidylyltransferase"/>
    <property type="match status" value="1"/>
</dbReference>
<dbReference type="Gene3D" id="3.40.50.620">
    <property type="entry name" value="HUPs"/>
    <property type="match status" value="1"/>
</dbReference>
<dbReference type="HAMAP" id="MF_02115">
    <property type="entry name" value="FAD_synth_arch"/>
    <property type="match status" value="1"/>
</dbReference>
<dbReference type="InterPro" id="IPR050385">
    <property type="entry name" value="Archaeal_FAD_synthase"/>
</dbReference>
<dbReference type="InterPro" id="IPR004821">
    <property type="entry name" value="Cyt_trans-like"/>
</dbReference>
<dbReference type="InterPro" id="IPR024902">
    <property type="entry name" value="FAD_synth_RibL"/>
</dbReference>
<dbReference type="InterPro" id="IPR014729">
    <property type="entry name" value="Rossmann-like_a/b/a_fold"/>
</dbReference>
<dbReference type="NCBIfam" id="TIGR00125">
    <property type="entry name" value="cyt_tran_rel"/>
    <property type="match status" value="1"/>
</dbReference>
<dbReference type="PANTHER" id="PTHR43793">
    <property type="entry name" value="FAD SYNTHASE"/>
    <property type="match status" value="1"/>
</dbReference>
<dbReference type="PANTHER" id="PTHR43793:SF1">
    <property type="entry name" value="FAD SYNTHASE"/>
    <property type="match status" value="1"/>
</dbReference>
<dbReference type="Pfam" id="PF01467">
    <property type="entry name" value="CTP_transf_like"/>
    <property type="match status" value="1"/>
</dbReference>
<dbReference type="SUPFAM" id="SSF52374">
    <property type="entry name" value="Nucleotidylyl transferase"/>
    <property type="match status" value="1"/>
</dbReference>
<gene>
    <name evidence="1" type="primary">ribL</name>
    <name type="ordered locus">Ferp_1676</name>
</gene>
<comment type="function">
    <text evidence="1">Catalyzes the transfer of the AMP portion of ATP to flavin mononucleotide (FMN) to produce flavin adenine dinucleotide (FAD) coenzyme.</text>
</comment>
<comment type="catalytic activity">
    <reaction evidence="1">
        <text>FMN + ATP + H(+) = FAD + diphosphate</text>
        <dbReference type="Rhea" id="RHEA:17237"/>
        <dbReference type="ChEBI" id="CHEBI:15378"/>
        <dbReference type="ChEBI" id="CHEBI:30616"/>
        <dbReference type="ChEBI" id="CHEBI:33019"/>
        <dbReference type="ChEBI" id="CHEBI:57692"/>
        <dbReference type="ChEBI" id="CHEBI:58210"/>
        <dbReference type="EC" id="2.7.7.2"/>
    </reaction>
</comment>
<comment type="cofactor">
    <cofactor evidence="1">
        <name>a divalent metal cation</name>
        <dbReference type="ChEBI" id="CHEBI:60240"/>
    </cofactor>
</comment>
<comment type="pathway">
    <text evidence="1">Cofactor biosynthesis; FAD biosynthesis; FAD from FMN: step 1/1.</text>
</comment>
<comment type="subunit">
    <text evidence="1">Homodimer.</text>
</comment>
<comment type="similarity">
    <text evidence="1">Belongs to the archaeal FAD synthase family.</text>
</comment>
<feature type="chain" id="PRO_0000406234" description="FAD synthase">
    <location>
        <begin position="1"/>
        <end position="152"/>
    </location>
</feature>
<feature type="binding site" evidence="1">
    <location>
        <begin position="9"/>
        <end position="10"/>
    </location>
    <ligand>
        <name>ATP</name>
        <dbReference type="ChEBI" id="CHEBI:30616"/>
    </ligand>
</feature>
<feature type="binding site" evidence="1">
    <location>
        <begin position="14"/>
        <end position="17"/>
    </location>
    <ligand>
        <name>ATP</name>
        <dbReference type="ChEBI" id="CHEBI:30616"/>
    </ligand>
</feature>
<feature type="binding site" evidence="1">
    <location>
        <position position="92"/>
    </location>
    <ligand>
        <name>ATP</name>
        <dbReference type="ChEBI" id="CHEBI:30616"/>
    </ligand>
</feature>
<name>RIBL_FERPA</name>
<reference key="1">
    <citation type="submission" date="2010-02" db="EMBL/GenBank/DDBJ databases">
        <title>Complete sequence of Ferroglobus placidus DSM 10642.</title>
        <authorList>
            <consortium name="US DOE Joint Genome Institute"/>
            <person name="Lucas S."/>
            <person name="Copeland A."/>
            <person name="Lapidus A."/>
            <person name="Cheng J.-F."/>
            <person name="Bruce D."/>
            <person name="Goodwin L."/>
            <person name="Pitluck S."/>
            <person name="Saunders E."/>
            <person name="Brettin T."/>
            <person name="Detter J.C."/>
            <person name="Han C."/>
            <person name="Tapia R."/>
            <person name="Larimer F."/>
            <person name="Land M."/>
            <person name="Hauser L."/>
            <person name="Kyrpides N."/>
            <person name="Ivanova N."/>
            <person name="Holmes D."/>
            <person name="Lovley D."/>
            <person name="Kyrpides N."/>
            <person name="Anderson I.J."/>
            <person name="Woyke T."/>
        </authorList>
    </citation>
    <scope>NUCLEOTIDE SEQUENCE [LARGE SCALE GENOMIC DNA]</scope>
    <source>
        <strain>DSM 10642 / AEDII12DO</strain>
    </source>
</reference>
<keyword id="KW-0067">ATP-binding</keyword>
<keyword id="KW-0274">FAD</keyword>
<keyword id="KW-0285">Flavoprotein</keyword>
<keyword id="KW-0288">FMN</keyword>
<keyword id="KW-0547">Nucleotide-binding</keyword>
<keyword id="KW-0548">Nucleotidyltransferase</keyword>
<keyword id="KW-1185">Reference proteome</keyword>
<keyword id="KW-0808">Transferase</keyword>
<proteinExistence type="inferred from homology"/>
<accession>D3RZA9</accession>
<organism>
    <name type="scientific">Ferroglobus placidus (strain DSM 10642 / AEDII12DO)</name>
    <dbReference type="NCBI Taxonomy" id="589924"/>
    <lineage>
        <taxon>Archaea</taxon>
        <taxon>Methanobacteriati</taxon>
        <taxon>Methanobacteriota</taxon>
        <taxon>Archaeoglobi</taxon>
        <taxon>Archaeoglobales</taxon>
        <taxon>Archaeoglobaceae</taxon>
        <taxon>Ferroglobus</taxon>
    </lineage>
</organism>
<sequence>MKKVVATGTFDIIHPGHVRFLEEAKKLGDYLVVIVAREKNVKHKPKPIMPEEQRRRVVEALKPVDEAILGDEEDIFKPIEKIKPDVIALGYDQHFDEEWLREELRKRGIKAEVVRIRAKEDCELCSSAKIIERIVTLASSRLKDFQERKEKL</sequence>
<evidence type="ECO:0000255" key="1">
    <source>
        <dbReference type="HAMAP-Rule" id="MF_02115"/>
    </source>
</evidence>